<sequence>MASEKSYKTVPVTGKNLAMIYHHMGNKTQSLEEAYKQLEKELGETQAPPPSPQSSLDGEPLSEGELEEISEEEEEEGEAPPPIPAKKRQRKNPSKAPAAKAPRNYGTPSYMLHVDLKHDIAGVLEEIRRASLKKPAHTPSIRNRTYPSITKRYLYERDSKKLQQYLDDSKKLLAKYSEGV</sequence>
<protein>
    <recommendedName>
        <fullName>Putative protein 33K</fullName>
    </recommendedName>
</protein>
<accession>A9CB92</accession>
<dbReference type="EMBL" id="DQ106414">
    <property type="protein sequence ID" value="ABA47242.1"/>
    <property type="molecule type" value="Genomic_DNA"/>
</dbReference>
<dbReference type="RefSeq" id="YP_001552259.1">
    <property type="nucleotide sequence ID" value="NC_009989.1"/>
</dbReference>
<dbReference type="GeneID" id="10973873"/>
<dbReference type="KEGG" id="vg:10973873"/>
<dbReference type="OrthoDB" id="22576at10239"/>
<dbReference type="Proteomes" id="UP000136605">
    <property type="component" value="Genome"/>
</dbReference>
<dbReference type="GO" id="GO:0019073">
    <property type="term" value="P:viral DNA genome packaging"/>
    <property type="evidence" value="ECO:0007669"/>
    <property type="project" value="InterPro"/>
</dbReference>
<dbReference type="InterPro" id="IPR021304">
    <property type="entry name" value="Adeno_L4-33K/L4-22K"/>
</dbReference>
<dbReference type="Pfam" id="PF11081">
    <property type="entry name" value="Adeno_L433K_22K"/>
    <property type="match status" value="1"/>
</dbReference>
<reference key="1">
    <citation type="journal article" date="2002" name="J. Gen. Virol.">
        <title>Genetic analysis of an adenovirus isolated from corn snake (Elaphe guttata) implies common origin with the members of the proposed new genus Atadenovirus.</title>
        <authorList>
            <person name="Farkas S.L."/>
            <person name="Benko M."/>
            <person name="Elo P.T."/>
            <person name="Ursu K."/>
            <person name="Dan A."/>
            <person name="Ahne W."/>
            <person name="Harrach B."/>
        </authorList>
    </citation>
    <scope>NUCLEOTIDE SEQUENCE [GENOMIC DNA]</scope>
</reference>
<evidence type="ECO:0000256" key="1">
    <source>
        <dbReference type="SAM" id="MobiDB-lite"/>
    </source>
</evidence>
<keyword id="KW-1185">Reference proteome</keyword>
<organismHost>
    <name type="scientific">Pantherophis guttatus</name>
    <name type="common">Corn snake</name>
    <name type="synonym">Elaphe guttata</name>
    <dbReference type="NCBI Taxonomy" id="94885"/>
</organismHost>
<feature type="chain" id="PRO_0000425930" description="Putative protein 33K">
    <location>
        <begin position="1"/>
        <end position="180"/>
    </location>
</feature>
<feature type="region of interest" description="Disordered" evidence="1">
    <location>
        <begin position="31"/>
        <end position="108"/>
    </location>
</feature>
<feature type="compositionally biased region" description="Basic and acidic residues" evidence="1">
    <location>
        <begin position="33"/>
        <end position="43"/>
    </location>
</feature>
<feature type="compositionally biased region" description="Acidic residues" evidence="1">
    <location>
        <begin position="60"/>
        <end position="78"/>
    </location>
</feature>
<name>33K_ADES1</name>
<proteinExistence type="predicted"/>
<organism>
    <name type="scientific">Snake adenovirus serotype 1</name>
    <name type="common">SnAdV-1</name>
    <dbReference type="NCBI Taxonomy" id="189830"/>
    <lineage>
        <taxon>Viruses</taxon>
        <taxon>Varidnaviria</taxon>
        <taxon>Bamfordvirae</taxon>
        <taxon>Preplasmiviricota</taxon>
        <taxon>Tectiliviricetes</taxon>
        <taxon>Rowavirales</taxon>
        <taxon>Adenoviridae</taxon>
        <taxon>Atadenovirus</taxon>
        <taxon>Snake atadenovirus A</taxon>
    </lineage>
</organism>